<gene>
    <name evidence="1" type="primary">hisD</name>
    <name type="ordered locus">ACIAD0663</name>
</gene>
<organism>
    <name type="scientific">Acinetobacter baylyi (strain ATCC 33305 / BD413 / ADP1)</name>
    <dbReference type="NCBI Taxonomy" id="62977"/>
    <lineage>
        <taxon>Bacteria</taxon>
        <taxon>Pseudomonadati</taxon>
        <taxon>Pseudomonadota</taxon>
        <taxon>Gammaproteobacteria</taxon>
        <taxon>Moraxellales</taxon>
        <taxon>Moraxellaceae</taxon>
        <taxon>Acinetobacter</taxon>
    </lineage>
</organism>
<accession>Q6FEC8</accession>
<evidence type="ECO:0000255" key="1">
    <source>
        <dbReference type="HAMAP-Rule" id="MF_01024"/>
    </source>
</evidence>
<dbReference type="EC" id="1.1.1.23" evidence="1"/>
<dbReference type="EMBL" id="CR543861">
    <property type="protein sequence ID" value="CAG67580.1"/>
    <property type="molecule type" value="Genomic_DNA"/>
</dbReference>
<dbReference type="SMR" id="Q6FEC8"/>
<dbReference type="STRING" id="202950.GCA_001485005_02431"/>
<dbReference type="KEGG" id="aci:ACIAD0663"/>
<dbReference type="eggNOG" id="COG0141">
    <property type="taxonomic scope" value="Bacteria"/>
</dbReference>
<dbReference type="HOGENOM" id="CLU_006732_3_3_6"/>
<dbReference type="UniPathway" id="UPA00031">
    <property type="reaction ID" value="UER00014"/>
</dbReference>
<dbReference type="Proteomes" id="UP000000430">
    <property type="component" value="Chromosome"/>
</dbReference>
<dbReference type="GO" id="GO:0005829">
    <property type="term" value="C:cytosol"/>
    <property type="evidence" value="ECO:0007669"/>
    <property type="project" value="TreeGrafter"/>
</dbReference>
<dbReference type="GO" id="GO:0004399">
    <property type="term" value="F:histidinol dehydrogenase activity"/>
    <property type="evidence" value="ECO:0007669"/>
    <property type="project" value="UniProtKB-UniRule"/>
</dbReference>
<dbReference type="GO" id="GO:0051287">
    <property type="term" value="F:NAD binding"/>
    <property type="evidence" value="ECO:0007669"/>
    <property type="project" value="InterPro"/>
</dbReference>
<dbReference type="GO" id="GO:0008270">
    <property type="term" value="F:zinc ion binding"/>
    <property type="evidence" value="ECO:0007669"/>
    <property type="project" value="UniProtKB-UniRule"/>
</dbReference>
<dbReference type="GO" id="GO:0000105">
    <property type="term" value="P:L-histidine biosynthetic process"/>
    <property type="evidence" value="ECO:0007669"/>
    <property type="project" value="UniProtKB-UniRule"/>
</dbReference>
<dbReference type="CDD" id="cd06572">
    <property type="entry name" value="Histidinol_dh"/>
    <property type="match status" value="1"/>
</dbReference>
<dbReference type="FunFam" id="3.40.50.1980:FF:000001">
    <property type="entry name" value="Histidinol dehydrogenase"/>
    <property type="match status" value="1"/>
</dbReference>
<dbReference type="FunFam" id="3.40.50.1980:FF:000026">
    <property type="entry name" value="Histidinol dehydrogenase"/>
    <property type="match status" value="1"/>
</dbReference>
<dbReference type="Gene3D" id="1.20.5.1300">
    <property type="match status" value="1"/>
</dbReference>
<dbReference type="Gene3D" id="3.40.50.1980">
    <property type="entry name" value="Nitrogenase molybdenum iron protein domain"/>
    <property type="match status" value="2"/>
</dbReference>
<dbReference type="HAMAP" id="MF_01024">
    <property type="entry name" value="HisD"/>
    <property type="match status" value="1"/>
</dbReference>
<dbReference type="InterPro" id="IPR016161">
    <property type="entry name" value="Ald_DH/histidinol_DH"/>
</dbReference>
<dbReference type="InterPro" id="IPR001692">
    <property type="entry name" value="Histidinol_DH_CS"/>
</dbReference>
<dbReference type="InterPro" id="IPR022695">
    <property type="entry name" value="Histidinol_DH_monofunct"/>
</dbReference>
<dbReference type="InterPro" id="IPR012131">
    <property type="entry name" value="Hstdl_DH"/>
</dbReference>
<dbReference type="NCBIfam" id="TIGR00069">
    <property type="entry name" value="hisD"/>
    <property type="match status" value="1"/>
</dbReference>
<dbReference type="PANTHER" id="PTHR21256:SF2">
    <property type="entry name" value="HISTIDINE BIOSYNTHESIS TRIFUNCTIONAL PROTEIN"/>
    <property type="match status" value="1"/>
</dbReference>
<dbReference type="PANTHER" id="PTHR21256">
    <property type="entry name" value="HISTIDINOL DEHYDROGENASE HDH"/>
    <property type="match status" value="1"/>
</dbReference>
<dbReference type="Pfam" id="PF00815">
    <property type="entry name" value="Histidinol_dh"/>
    <property type="match status" value="1"/>
</dbReference>
<dbReference type="PIRSF" id="PIRSF000099">
    <property type="entry name" value="Histidinol_dh"/>
    <property type="match status" value="1"/>
</dbReference>
<dbReference type="PRINTS" id="PR00083">
    <property type="entry name" value="HOLDHDRGNASE"/>
</dbReference>
<dbReference type="SUPFAM" id="SSF53720">
    <property type="entry name" value="ALDH-like"/>
    <property type="match status" value="1"/>
</dbReference>
<dbReference type="PROSITE" id="PS00611">
    <property type="entry name" value="HISOL_DEHYDROGENASE"/>
    <property type="match status" value="1"/>
</dbReference>
<feature type="chain" id="PRO_0000135713" description="Histidinol dehydrogenase">
    <location>
        <begin position="1"/>
        <end position="430"/>
    </location>
</feature>
<feature type="active site" description="Proton acceptor" evidence="1">
    <location>
        <position position="328"/>
    </location>
</feature>
<feature type="active site" description="Proton acceptor" evidence="1">
    <location>
        <position position="329"/>
    </location>
</feature>
<feature type="binding site" evidence="1">
    <location>
        <position position="131"/>
    </location>
    <ligand>
        <name>NAD(+)</name>
        <dbReference type="ChEBI" id="CHEBI:57540"/>
    </ligand>
</feature>
<feature type="binding site" evidence="1">
    <location>
        <position position="192"/>
    </location>
    <ligand>
        <name>NAD(+)</name>
        <dbReference type="ChEBI" id="CHEBI:57540"/>
    </ligand>
</feature>
<feature type="binding site" evidence="1">
    <location>
        <position position="215"/>
    </location>
    <ligand>
        <name>NAD(+)</name>
        <dbReference type="ChEBI" id="CHEBI:57540"/>
    </ligand>
</feature>
<feature type="binding site" evidence="1">
    <location>
        <position position="238"/>
    </location>
    <ligand>
        <name>substrate</name>
    </ligand>
</feature>
<feature type="binding site" evidence="1">
    <location>
        <position position="260"/>
    </location>
    <ligand>
        <name>substrate</name>
    </ligand>
</feature>
<feature type="binding site" evidence="1">
    <location>
        <position position="260"/>
    </location>
    <ligand>
        <name>Zn(2+)</name>
        <dbReference type="ChEBI" id="CHEBI:29105"/>
    </ligand>
</feature>
<feature type="binding site" evidence="1">
    <location>
        <position position="263"/>
    </location>
    <ligand>
        <name>substrate</name>
    </ligand>
</feature>
<feature type="binding site" evidence="1">
    <location>
        <position position="263"/>
    </location>
    <ligand>
        <name>Zn(2+)</name>
        <dbReference type="ChEBI" id="CHEBI:29105"/>
    </ligand>
</feature>
<feature type="binding site" evidence="1">
    <location>
        <position position="329"/>
    </location>
    <ligand>
        <name>substrate</name>
    </ligand>
</feature>
<feature type="binding site" evidence="1">
    <location>
        <position position="362"/>
    </location>
    <ligand>
        <name>substrate</name>
    </ligand>
</feature>
<feature type="binding site" evidence="1">
    <location>
        <position position="362"/>
    </location>
    <ligand>
        <name>Zn(2+)</name>
        <dbReference type="ChEBI" id="CHEBI:29105"/>
    </ligand>
</feature>
<feature type="binding site" evidence="1">
    <location>
        <position position="416"/>
    </location>
    <ligand>
        <name>substrate</name>
    </ligand>
</feature>
<feature type="binding site" evidence="1">
    <location>
        <position position="421"/>
    </location>
    <ligand>
        <name>substrate</name>
    </ligand>
</feature>
<feature type="binding site" evidence="1">
    <location>
        <position position="421"/>
    </location>
    <ligand>
        <name>Zn(2+)</name>
        <dbReference type="ChEBI" id="CHEBI:29105"/>
    </ligand>
</feature>
<proteinExistence type="inferred from homology"/>
<reference key="1">
    <citation type="journal article" date="2004" name="Nucleic Acids Res.">
        <title>Unique features revealed by the genome sequence of Acinetobacter sp. ADP1, a versatile and naturally transformation competent bacterium.</title>
        <authorList>
            <person name="Barbe V."/>
            <person name="Vallenet D."/>
            <person name="Fonknechten N."/>
            <person name="Kreimeyer A."/>
            <person name="Oztas S."/>
            <person name="Labarre L."/>
            <person name="Cruveiller S."/>
            <person name="Robert C."/>
            <person name="Duprat S."/>
            <person name="Wincker P."/>
            <person name="Ornston L.N."/>
            <person name="Weissenbach J."/>
            <person name="Marliere P."/>
            <person name="Cohen G.N."/>
            <person name="Medigue C."/>
        </authorList>
    </citation>
    <scope>NUCLEOTIDE SEQUENCE [LARGE SCALE GENOMIC DNA]</scope>
    <source>
        <strain>ATCC 33305 / BD413 / ADP1</strain>
    </source>
</reference>
<sequence length="430" mass="46671">MMRRLSTQDQSFKQVFADLLAFETVNDPELLKTVDQIIADVRQYGDEHVLKLTQQFDRHPAHQFSDLELTQEQLKTAFEALTAEIREALELAAERIRSFHQAQKQEGWSYVDALGNTLGQKVTPLDRVGIYVPGGLASYPSSVLMNAIPAHVAGVPEIIMVVPAPNGELNSLVLAAAYLAGVSRIFTIGGAQAVAALAYGTQTIPAVDKITGPGNRFVAAAKRAVFGQVGIDMIAGPSEILVYAEGQNNAKWLAMDLLSQAEHDTVAQAIFITPDEALLDEVAQAIEEHLAALPKADIARTSIANRGALVLVKDRDEAIELINQVAPEHLELCLDESEAMSQKIRHAGAIFMGRYTPEAIGDYCAGPNHVLPTSGTARFSSPLGVYDFQKRSSLIMCSQEGVKSLAKAADVLAQQENLDAHARSARYRYQ</sequence>
<keyword id="KW-0028">Amino-acid biosynthesis</keyword>
<keyword id="KW-0368">Histidine biosynthesis</keyword>
<keyword id="KW-0479">Metal-binding</keyword>
<keyword id="KW-0520">NAD</keyword>
<keyword id="KW-0560">Oxidoreductase</keyword>
<keyword id="KW-0862">Zinc</keyword>
<name>HISX_ACIAD</name>
<comment type="function">
    <text evidence="1">Catalyzes the sequential NAD-dependent oxidations of L-histidinol to L-histidinaldehyde and then to L-histidine.</text>
</comment>
<comment type="catalytic activity">
    <reaction evidence="1">
        <text>L-histidinol + 2 NAD(+) + H2O = L-histidine + 2 NADH + 3 H(+)</text>
        <dbReference type="Rhea" id="RHEA:20641"/>
        <dbReference type="ChEBI" id="CHEBI:15377"/>
        <dbReference type="ChEBI" id="CHEBI:15378"/>
        <dbReference type="ChEBI" id="CHEBI:57540"/>
        <dbReference type="ChEBI" id="CHEBI:57595"/>
        <dbReference type="ChEBI" id="CHEBI:57699"/>
        <dbReference type="ChEBI" id="CHEBI:57945"/>
        <dbReference type="EC" id="1.1.1.23"/>
    </reaction>
</comment>
<comment type="cofactor">
    <cofactor evidence="1">
        <name>Zn(2+)</name>
        <dbReference type="ChEBI" id="CHEBI:29105"/>
    </cofactor>
    <text evidence="1">Binds 1 zinc ion per subunit.</text>
</comment>
<comment type="pathway">
    <text evidence="1">Amino-acid biosynthesis; L-histidine biosynthesis; L-histidine from 5-phospho-alpha-D-ribose 1-diphosphate: step 9/9.</text>
</comment>
<comment type="similarity">
    <text evidence="1">Belongs to the histidinol dehydrogenase family.</text>
</comment>
<protein>
    <recommendedName>
        <fullName evidence="1">Histidinol dehydrogenase</fullName>
        <shortName evidence="1">HDH</shortName>
        <ecNumber evidence="1">1.1.1.23</ecNumber>
    </recommendedName>
</protein>